<accession>B8CTN5</accession>
<proteinExistence type="inferred from homology"/>
<dbReference type="EC" id="4.1.1.98" evidence="1"/>
<dbReference type="EMBL" id="CP000472">
    <property type="protein sequence ID" value="ACJ31279.1"/>
    <property type="molecule type" value="Genomic_DNA"/>
</dbReference>
<dbReference type="RefSeq" id="WP_020914609.1">
    <property type="nucleotide sequence ID" value="NC_011566.1"/>
</dbReference>
<dbReference type="SMR" id="B8CTN5"/>
<dbReference type="STRING" id="225849.swp_4641"/>
<dbReference type="KEGG" id="swp:swp_4641"/>
<dbReference type="eggNOG" id="COG0043">
    <property type="taxonomic scope" value="Bacteria"/>
</dbReference>
<dbReference type="HOGENOM" id="CLU_023348_4_1_6"/>
<dbReference type="OrthoDB" id="9809841at2"/>
<dbReference type="UniPathway" id="UPA00232"/>
<dbReference type="Proteomes" id="UP000000753">
    <property type="component" value="Chromosome"/>
</dbReference>
<dbReference type="GO" id="GO:0005829">
    <property type="term" value="C:cytosol"/>
    <property type="evidence" value="ECO:0007669"/>
    <property type="project" value="TreeGrafter"/>
</dbReference>
<dbReference type="GO" id="GO:0005886">
    <property type="term" value="C:plasma membrane"/>
    <property type="evidence" value="ECO:0007669"/>
    <property type="project" value="UniProtKB-SubCell"/>
</dbReference>
<dbReference type="GO" id="GO:0008694">
    <property type="term" value="F:3-octaprenyl-4-hydroxybenzoate carboxy-lyase activity"/>
    <property type="evidence" value="ECO:0007669"/>
    <property type="project" value="UniProtKB-UniRule"/>
</dbReference>
<dbReference type="GO" id="GO:0046872">
    <property type="term" value="F:metal ion binding"/>
    <property type="evidence" value="ECO:0007669"/>
    <property type="project" value="UniProtKB-KW"/>
</dbReference>
<dbReference type="GO" id="GO:0006744">
    <property type="term" value="P:ubiquinone biosynthetic process"/>
    <property type="evidence" value="ECO:0007669"/>
    <property type="project" value="UniProtKB-UniRule"/>
</dbReference>
<dbReference type="FunFam" id="1.20.5.570:FF:000001">
    <property type="entry name" value="3-octaprenyl-4-hydroxybenzoate carboxy-lyase"/>
    <property type="match status" value="1"/>
</dbReference>
<dbReference type="FunFam" id="3.40.1670.10:FF:000001">
    <property type="entry name" value="3-octaprenyl-4-hydroxybenzoate carboxy-lyase"/>
    <property type="match status" value="1"/>
</dbReference>
<dbReference type="Gene3D" id="1.20.5.570">
    <property type="entry name" value="Single helix bin"/>
    <property type="match status" value="1"/>
</dbReference>
<dbReference type="Gene3D" id="3.40.1670.10">
    <property type="entry name" value="UbiD C-terminal domain-like"/>
    <property type="match status" value="1"/>
</dbReference>
<dbReference type="HAMAP" id="MF_01636">
    <property type="entry name" value="UbiD"/>
    <property type="match status" value="1"/>
</dbReference>
<dbReference type="InterPro" id="IPR002830">
    <property type="entry name" value="UbiD"/>
</dbReference>
<dbReference type="InterPro" id="IPR049381">
    <property type="entry name" value="UbiD-like_C"/>
</dbReference>
<dbReference type="InterPro" id="IPR049383">
    <property type="entry name" value="UbiD-like_N"/>
</dbReference>
<dbReference type="InterPro" id="IPR023677">
    <property type="entry name" value="UbiD_bacteria"/>
</dbReference>
<dbReference type="InterPro" id="IPR048304">
    <property type="entry name" value="UbiD_Rift_dom"/>
</dbReference>
<dbReference type="NCBIfam" id="NF008175">
    <property type="entry name" value="PRK10922.1"/>
    <property type="match status" value="1"/>
</dbReference>
<dbReference type="NCBIfam" id="TIGR00148">
    <property type="entry name" value="UbiD family decarboxylase"/>
    <property type="match status" value="1"/>
</dbReference>
<dbReference type="PANTHER" id="PTHR30108">
    <property type="entry name" value="3-OCTAPRENYL-4-HYDROXYBENZOATE CARBOXY-LYASE-RELATED"/>
    <property type="match status" value="1"/>
</dbReference>
<dbReference type="PANTHER" id="PTHR30108:SF17">
    <property type="entry name" value="FERULIC ACID DECARBOXYLASE 1"/>
    <property type="match status" value="1"/>
</dbReference>
<dbReference type="Pfam" id="PF01977">
    <property type="entry name" value="UbiD"/>
    <property type="match status" value="1"/>
</dbReference>
<dbReference type="Pfam" id="PF20696">
    <property type="entry name" value="UbiD_C"/>
    <property type="match status" value="1"/>
</dbReference>
<dbReference type="Pfam" id="PF20695">
    <property type="entry name" value="UbiD_N"/>
    <property type="match status" value="1"/>
</dbReference>
<dbReference type="SUPFAM" id="SSF50475">
    <property type="entry name" value="FMN-binding split barrel"/>
    <property type="match status" value="1"/>
</dbReference>
<dbReference type="SUPFAM" id="SSF143968">
    <property type="entry name" value="UbiD C-terminal domain-like"/>
    <property type="match status" value="1"/>
</dbReference>
<keyword id="KW-1003">Cell membrane</keyword>
<keyword id="KW-0210">Decarboxylase</keyword>
<keyword id="KW-0285">Flavoprotein</keyword>
<keyword id="KW-0288">FMN</keyword>
<keyword id="KW-0456">Lyase</keyword>
<keyword id="KW-0464">Manganese</keyword>
<keyword id="KW-0472">Membrane</keyword>
<keyword id="KW-0479">Metal-binding</keyword>
<keyword id="KW-0831">Ubiquinone biosynthesis</keyword>
<evidence type="ECO:0000255" key="1">
    <source>
        <dbReference type="HAMAP-Rule" id="MF_01636"/>
    </source>
</evidence>
<organism>
    <name type="scientific">Shewanella piezotolerans (strain WP3 / JCM 13877)</name>
    <dbReference type="NCBI Taxonomy" id="225849"/>
    <lineage>
        <taxon>Bacteria</taxon>
        <taxon>Pseudomonadati</taxon>
        <taxon>Pseudomonadota</taxon>
        <taxon>Gammaproteobacteria</taxon>
        <taxon>Alteromonadales</taxon>
        <taxon>Shewanellaceae</taxon>
        <taxon>Shewanella</taxon>
    </lineage>
</organism>
<sequence length="493" mass="55587">MSFKDLRSFIEHLESNGELKRISHPVDPHLEMTEIADRVLRSKGPALLFENPVGNDMPVLANLFGTPKRVAMALGKEDPLALRDVGELLAFLKEPEPPRGFKDAISKIPMFKQALNMPPKTVRNPPCQEVVKTAEEVDLTKLPIQHCWPGDVAPLVTWGLTITKGPRQKRQNLGIYRQQLLGKDKLIMRWLDHRGGALDFKDFKEKHPGDRYPVVVALGSDPVTILGAVTPVPDSMSEYAFAGLLRGERTEVCKAISCDLEVPATSEIILEGYIDPEEMAEEGPYGDHTGYYNETDSFPVFTVTHITHRKDAIYHSTYTGRPPDEPAMLGVALNEVFVPILRKQYPEIIDFYLPPEGCSYRMAVISIRKQYPGHAKRVMMGAWSFLRQFMYTKFIVVVDEDVNCRDWNDVIWAITTRMDPKRDTVMIENTPIDYLDFASPVAGLGSKMGMDATNKWEGETDREWGTPIVMDEAVKQKVDEIWSDLGIDDAPTL</sequence>
<protein>
    <recommendedName>
        <fullName evidence="1">3-octaprenyl-4-hydroxybenzoate carboxy-lyase</fullName>
        <ecNumber evidence="1">4.1.1.98</ecNumber>
    </recommendedName>
    <alternativeName>
        <fullName evidence="1">Polyprenyl p-hydroxybenzoate decarboxylase</fullName>
    </alternativeName>
</protein>
<feature type="chain" id="PRO_1000186723" description="3-octaprenyl-4-hydroxybenzoate carboxy-lyase">
    <location>
        <begin position="1"/>
        <end position="493"/>
    </location>
</feature>
<feature type="active site" description="Proton donor" evidence="1">
    <location>
        <position position="287"/>
    </location>
</feature>
<feature type="binding site" evidence="1">
    <location>
        <position position="172"/>
    </location>
    <ligand>
        <name>Mn(2+)</name>
        <dbReference type="ChEBI" id="CHEBI:29035"/>
    </ligand>
</feature>
<feature type="binding site" evidence="1">
    <location>
        <begin position="175"/>
        <end position="177"/>
    </location>
    <ligand>
        <name>prenylated FMN</name>
        <dbReference type="ChEBI" id="CHEBI:87746"/>
    </ligand>
</feature>
<feature type="binding site" evidence="1">
    <location>
        <begin position="189"/>
        <end position="191"/>
    </location>
    <ligand>
        <name>prenylated FMN</name>
        <dbReference type="ChEBI" id="CHEBI:87746"/>
    </ligand>
</feature>
<feature type="binding site" evidence="1">
    <location>
        <begin position="194"/>
        <end position="195"/>
    </location>
    <ligand>
        <name>prenylated FMN</name>
        <dbReference type="ChEBI" id="CHEBI:87746"/>
    </ligand>
</feature>
<feature type="binding site" evidence="1">
    <location>
        <position position="238"/>
    </location>
    <ligand>
        <name>Mn(2+)</name>
        <dbReference type="ChEBI" id="CHEBI:29035"/>
    </ligand>
</feature>
<comment type="function">
    <text evidence="1">Catalyzes the decarboxylation of 3-octaprenyl-4-hydroxy benzoate to 2-octaprenylphenol, an intermediate step in ubiquinone biosynthesis.</text>
</comment>
<comment type="catalytic activity">
    <reaction evidence="1">
        <text>a 4-hydroxy-3-(all-trans-polyprenyl)benzoate + H(+) = a 2-(all-trans-polyprenyl)phenol + CO2</text>
        <dbReference type="Rhea" id="RHEA:41680"/>
        <dbReference type="Rhea" id="RHEA-COMP:9514"/>
        <dbReference type="Rhea" id="RHEA-COMP:9516"/>
        <dbReference type="ChEBI" id="CHEBI:1269"/>
        <dbReference type="ChEBI" id="CHEBI:15378"/>
        <dbReference type="ChEBI" id="CHEBI:16526"/>
        <dbReference type="ChEBI" id="CHEBI:78396"/>
        <dbReference type="EC" id="4.1.1.98"/>
    </reaction>
</comment>
<comment type="cofactor">
    <cofactor evidence="1">
        <name>prenylated FMN</name>
        <dbReference type="ChEBI" id="CHEBI:87746"/>
    </cofactor>
    <text evidence="1">Binds 1 prenylated FMN per subunit.</text>
</comment>
<comment type="cofactor">
    <cofactor evidence="1">
        <name>Mn(2+)</name>
        <dbReference type="ChEBI" id="CHEBI:29035"/>
    </cofactor>
</comment>
<comment type="pathway">
    <text evidence="1">Cofactor biosynthesis; ubiquinone biosynthesis.</text>
</comment>
<comment type="subunit">
    <text evidence="1">Homohexamer.</text>
</comment>
<comment type="subcellular location">
    <subcellularLocation>
        <location evidence="1">Cell membrane</location>
        <topology evidence="1">Peripheral membrane protein</topology>
    </subcellularLocation>
</comment>
<comment type="similarity">
    <text evidence="1">Belongs to the UbiD family.</text>
</comment>
<gene>
    <name evidence="1" type="primary">ubiD</name>
    <name type="ordered locus">swp_4641</name>
</gene>
<reference key="1">
    <citation type="journal article" date="2008" name="PLoS ONE">
        <title>Environmental adaptation: genomic analysis of the piezotolerant and psychrotolerant deep-sea iron reducing bacterium Shewanella piezotolerans WP3.</title>
        <authorList>
            <person name="Wang F."/>
            <person name="Wang J."/>
            <person name="Jian H."/>
            <person name="Zhang B."/>
            <person name="Li S."/>
            <person name="Wang F."/>
            <person name="Zeng X."/>
            <person name="Gao L."/>
            <person name="Bartlett D.H."/>
            <person name="Yu J."/>
            <person name="Hu S."/>
            <person name="Xiao X."/>
        </authorList>
    </citation>
    <scope>NUCLEOTIDE SEQUENCE [LARGE SCALE GENOMIC DNA]</scope>
    <source>
        <strain>WP3 / JCM 13877</strain>
    </source>
</reference>
<name>UBID_SHEPW</name>